<protein>
    <recommendedName>
        <fullName>Chalcone synthase</fullName>
        <ecNumber>2.3.1.74</ecNumber>
    </recommendedName>
    <alternativeName>
        <fullName>Naringenin-chalcone synthase</fullName>
    </alternativeName>
</protein>
<keyword id="KW-0012">Acyltransferase</keyword>
<keyword id="KW-0284">Flavonoid biosynthesis</keyword>
<keyword id="KW-0808">Transferase</keyword>
<reference key="1">
    <citation type="submission" date="1997-10" db="EMBL/GenBank/DDBJ databases">
        <title>Plant polyketide synthases: a chalcone synthase-type enzyme that performs with methylmalonyl-CoA a specific condensation reaction in the biosynthesis of C-methylated chalcones.</title>
        <authorList>
            <person name="Schroeder J."/>
        </authorList>
    </citation>
    <scope>NUCLEOTIDE SEQUENCE [MRNA]</scope>
</reference>
<organism>
    <name type="scientific">Pinus strobus</name>
    <name type="common">Eastern white pine</name>
    <dbReference type="NCBI Taxonomy" id="3348"/>
    <lineage>
        <taxon>Eukaryota</taxon>
        <taxon>Viridiplantae</taxon>
        <taxon>Streptophyta</taxon>
        <taxon>Embryophyta</taxon>
        <taxon>Tracheophyta</taxon>
        <taxon>Spermatophyta</taxon>
        <taxon>Pinopsida</taxon>
        <taxon>Pinidae</taxon>
        <taxon>Conifers I</taxon>
        <taxon>Pinales</taxon>
        <taxon>Pinaceae</taxon>
        <taxon>Pinus</taxon>
        <taxon>Pinus subgen. Strobus</taxon>
    </lineage>
</organism>
<feature type="chain" id="PRO_0000216041" description="Chalcone synthase">
    <location>
        <begin position="1"/>
        <end position="395"/>
    </location>
</feature>
<feature type="active site" evidence="1">
    <location>
        <position position="169"/>
    </location>
</feature>
<sequence>MPGGMMADLEAFRKAQRADGPATILAIGTATPPNAVDQSTYPDYYFKITNSEHMTELKEKFRRMCDKSGIKKRYMYLTEEILNENPSVCAYMAPSLDARQDMVVVEVPRLGKEAAAKAIKEWGQPKSKITHVIFCTTSGVDMPGADYQMTKLLGLRPSVKRVMMYQQGCFAGGTVLRVAKDLAENNRGARVLVVCSEITAVTFRGPSDTHLDSMVGQALFGDGARALIVGADPVPEVEKPCFEMLWTAQTILPDSDGAIDGHLREVGLTFHLLKDVPGLISKNIEKSLVEAFQQFGISDWNQLFWIAHPGGPAILDQVEAKLNLDPKKLRATRQVLSEYGNMSSACVHFILDEMRKSSQQNGCSTTGEGLDVGVLFGFGPGLTVETVVLKSVPLQ</sequence>
<evidence type="ECO:0000255" key="1">
    <source>
        <dbReference type="PROSITE-ProRule" id="PRU10023"/>
    </source>
</evidence>
<evidence type="ECO:0000305" key="2"/>
<comment type="function">
    <text>The primary product of this enzyme is 4,2',4',6'-tetrahydroxychalcone (also termed naringenin-chalcone or chalcone) which can under specific conditions spontaneously isomerize into naringenin.</text>
</comment>
<comment type="catalytic activity">
    <reaction evidence="1">
        <text>(E)-4-coumaroyl-CoA + 3 malonyl-CoA + 3 H(+) = 2',4,4',6'-tetrahydroxychalcone + 3 CO2 + 4 CoA</text>
        <dbReference type="Rhea" id="RHEA:11128"/>
        <dbReference type="ChEBI" id="CHEBI:15378"/>
        <dbReference type="ChEBI" id="CHEBI:15413"/>
        <dbReference type="ChEBI" id="CHEBI:16526"/>
        <dbReference type="ChEBI" id="CHEBI:57287"/>
        <dbReference type="ChEBI" id="CHEBI:57384"/>
        <dbReference type="ChEBI" id="CHEBI:85008"/>
        <dbReference type="EC" id="2.3.1.74"/>
    </reaction>
</comment>
<comment type="pathway">
    <text>Secondary metabolite biosynthesis; flavonoid biosynthesis.</text>
</comment>
<comment type="similarity">
    <text evidence="2">Belongs to the thiolase-like superfamily. Chalcone/stilbene synthases family.</text>
</comment>
<dbReference type="EC" id="2.3.1.74"/>
<dbReference type="EMBL" id="AJ004800">
    <property type="protein sequence ID" value="CAA06077.1"/>
    <property type="molecule type" value="mRNA"/>
</dbReference>
<dbReference type="SMR" id="O65872"/>
<dbReference type="UniPathway" id="UPA00154"/>
<dbReference type="GO" id="GO:0016210">
    <property type="term" value="F:naringenin-chalcone synthase activity"/>
    <property type="evidence" value="ECO:0007669"/>
    <property type="project" value="UniProtKB-EC"/>
</dbReference>
<dbReference type="GO" id="GO:0009813">
    <property type="term" value="P:flavonoid biosynthetic process"/>
    <property type="evidence" value="ECO:0007669"/>
    <property type="project" value="UniProtKB-UniPathway"/>
</dbReference>
<dbReference type="GO" id="GO:0030639">
    <property type="term" value="P:polyketide biosynthetic process"/>
    <property type="evidence" value="ECO:0007669"/>
    <property type="project" value="TreeGrafter"/>
</dbReference>
<dbReference type="CDD" id="cd00831">
    <property type="entry name" value="CHS_like"/>
    <property type="match status" value="1"/>
</dbReference>
<dbReference type="FunFam" id="3.40.47.10:FF:000014">
    <property type="entry name" value="Chalcone synthase 1"/>
    <property type="match status" value="1"/>
</dbReference>
<dbReference type="FunFam" id="3.40.47.10:FF:000025">
    <property type="entry name" value="Chalcone synthase 2"/>
    <property type="match status" value="1"/>
</dbReference>
<dbReference type="Gene3D" id="3.40.47.10">
    <property type="match status" value="2"/>
</dbReference>
<dbReference type="InterPro" id="IPR012328">
    <property type="entry name" value="Chalcone/stilbene_synt_C"/>
</dbReference>
<dbReference type="InterPro" id="IPR001099">
    <property type="entry name" value="Chalcone/stilbene_synt_N"/>
</dbReference>
<dbReference type="InterPro" id="IPR018088">
    <property type="entry name" value="Chalcone/stilbene_synthase_AS"/>
</dbReference>
<dbReference type="InterPro" id="IPR011141">
    <property type="entry name" value="Polyketide_synthase_type-III"/>
</dbReference>
<dbReference type="InterPro" id="IPR016039">
    <property type="entry name" value="Thiolase-like"/>
</dbReference>
<dbReference type="PANTHER" id="PTHR11877:SF14">
    <property type="entry name" value="CHALCONE SYNTHASE"/>
    <property type="match status" value="1"/>
</dbReference>
<dbReference type="PANTHER" id="PTHR11877">
    <property type="entry name" value="HYDROXYMETHYLGLUTARYL-COA SYNTHASE"/>
    <property type="match status" value="1"/>
</dbReference>
<dbReference type="Pfam" id="PF02797">
    <property type="entry name" value="Chal_sti_synt_C"/>
    <property type="match status" value="1"/>
</dbReference>
<dbReference type="Pfam" id="PF00195">
    <property type="entry name" value="Chal_sti_synt_N"/>
    <property type="match status" value="1"/>
</dbReference>
<dbReference type="PIRSF" id="PIRSF000451">
    <property type="entry name" value="PKS_III"/>
    <property type="match status" value="1"/>
</dbReference>
<dbReference type="SUPFAM" id="SSF53901">
    <property type="entry name" value="Thiolase-like"/>
    <property type="match status" value="2"/>
</dbReference>
<dbReference type="PROSITE" id="PS00441">
    <property type="entry name" value="CHALCONE_SYNTH"/>
    <property type="match status" value="1"/>
</dbReference>
<gene>
    <name type="primary">CHS</name>
</gene>
<proteinExistence type="evidence at transcript level"/>
<accession>O65872</accession>
<name>CHSY_PINST</name>